<comment type="function">
    <text>Control of actomyosin interactions in smooth muscle and nonmuscle cells (could act as a bridge between myosin and actin filaments). Inhibits the actin-activated ATPase of myosin this inhibition is attenuated by calcium-calmodulin and is potentiated by tropomyosin. Interacts with actin, myosin, 2 molecules of tropomyosin and with calmodulin.</text>
</comment>
<comment type="subcellular location">
    <subcellularLocation>
        <location>Cytoplasm</location>
        <location>Cytoskeleton</location>
    </subcellularLocation>
    <subcellularLocation>
        <location>Cytoplasm</location>
        <location>Myofibril</location>
    </subcellularLocation>
    <subcellularLocation>
        <location>Cytoplasm</location>
        <location>Cytoskeleton</location>
        <location>Stress fiber</location>
    </subcellularLocation>
    <text>On thin filaments in smooth muscle and on stress fibers in fibroblasts (nonmuscle).</text>
</comment>
<dbReference type="PIR" id="S16925">
    <property type="entry name" value="S16925"/>
</dbReference>
<dbReference type="BMRB" id="P13505"/>
<dbReference type="SMR" id="P13505"/>
<dbReference type="InParanoid" id="P13505"/>
<dbReference type="OrthoDB" id="9908857at2759"/>
<dbReference type="Proteomes" id="UP000001645">
    <property type="component" value="Unplaced"/>
</dbReference>
<dbReference type="GO" id="GO:0005884">
    <property type="term" value="C:actin filament"/>
    <property type="evidence" value="ECO:0000314"/>
    <property type="project" value="CAFA"/>
</dbReference>
<dbReference type="GO" id="GO:0030016">
    <property type="term" value="C:myofibril"/>
    <property type="evidence" value="ECO:0007669"/>
    <property type="project" value="UniProtKB-SubCell"/>
</dbReference>
<dbReference type="GO" id="GO:0001725">
    <property type="term" value="C:stress fiber"/>
    <property type="evidence" value="ECO:0007669"/>
    <property type="project" value="UniProtKB-SubCell"/>
</dbReference>
<dbReference type="GO" id="GO:0051015">
    <property type="term" value="F:actin filament binding"/>
    <property type="evidence" value="ECO:0000353"/>
    <property type="project" value="CAFA"/>
</dbReference>
<dbReference type="GO" id="GO:0005516">
    <property type="term" value="F:calmodulin binding"/>
    <property type="evidence" value="ECO:0007669"/>
    <property type="project" value="UniProtKB-KW"/>
</dbReference>
<dbReference type="GO" id="GO:0017022">
    <property type="term" value="F:myosin binding"/>
    <property type="evidence" value="ECO:0000353"/>
    <property type="project" value="CAFA"/>
</dbReference>
<dbReference type="GO" id="GO:0051017">
    <property type="term" value="P:actin filament bundle assembly"/>
    <property type="evidence" value="ECO:0007669"/>
    <property type="project" value="TreeGrafter"/>
</dbReference>
<dbReference type="GO" id="GO:0001525">
    <property type="term" value="P:angiogenesis"/>
    <property type="evidence" value="ECO:0007669"/>
    <property type="project" value="TreeGrafter"/>
</dbReference>
<dbReference type="GO" id="GO:0006936">
    <property type="term" value="P:muscle contraction"/>
    <property type="evidence" value="ECO:0007669"/>
    <property type="project" value="InterPro"/>
</dbReference>
<dbReference type="GO" id="GO:1904530">
    <property type="term" value="P:negative regulation of actin filament binding"/>
    <property type="evidence" value="ECO:0000314"/>
    <property type="project" value="CAFA"/>
</dbReference>
<dbReference type="InterPro" id="IPR006017">
    <property type="entry name" value="Caldesmon"/>
</dbReference>
<dbReference type="InterPro" id="IPR006018">
    <property type="entry name" value="Caldesmon_LSP"/>
</dbReference>
<dbReference type="PANTHER" id="PTHR18949">
    <property type="entry name" value="CALDESMON"/>
    <property type="match status" value="1"/>
</dbReference>
<dbReference type="PANTHER" id="PTHR18949:SF0">
    <property type="entry name" value="CALDESMON"/>
    <property type="match status" value="1"/>
</dbReference>
<dbReference type="Pfam" id="PF02029">
    <property type="entry name" value="Caldesmon"/>
    <property type="match status" value="1"/>
</dbReference>
<dbReference type="PRINTS" id="PR01076">
    <property type="entry name" value="CALDESMON"/>
</dbReference>
<gene>
    <name type="primary">CALD1</name>
    <name type="synonym">CAD</name>
</gene>
<sequence length="274" mass="30408">SNLKGAANAEAGSEKLKEKQQEAAVELDELKKRREERRKILEEEEQKKKQEEAERKIREEEEKKRMKEEIERRRAEAAEKRQKMPEDGVSEEKKPFKCFSPKGSSLKIEERAEFLNKSAQKSGMKPAHTTAVVSKIDSRLEQYTSAVVGNKAAKPAKPAASDLPVPAEGVRNIKSMWEKGNVFSSPGGTGTPNKETAGLKVGVSSRINEWLTKTPEGNKSPAPKPSDLRPGDVSGKRNLWEKQSVEKPAASSSKVTATGKKSETDGLRQFEKEP</sequence>
<feature type="chain" id="PRO_0000089289" description="Caldesmon, smooth muscle">
    <location>
        <begin position="1" status="less than"/>
        <end position="274" status="greater than"/>
    </location>
</feature>
<feature type="region of interest" description="Disordered" evidence="1">
    <location>
        <begin position="1"/>
        <end position="102"/>
    </location>
</feature>
<feature type="region of interest" description="Disordered" evidence="1">
    <location>
        <begin position="179"/>
        <end position="274"/>
    </location>
</feature>
<feature type="compositionally biased region" description="Basic and acidic residues" evidence="1">
    <location>
        <begin position="12"/>
        <end position="21"/>
    </location>
</feature>
<feature type="compositionally biased region" description="Basic and acidic residues" evidence="1">
    <location>
        <begin position="28"/>
        <end position="95"/>
    </location>
</feature>
<feature type="compositionally biased region" description="Polar residues" evidence="1">
    <location>
        <begin position="182"/>
        <end position="194"/>
    </location>
</feature>
<feature type="compositionally biased region" description="Basic and acidic residues" evidence="1">
    <location>
        <begin position="226"/>
        <end position="245"/>
    </location>
</feature>
<feature type="compositionally biased region" description="Basic and acidic residues" evidence="1">
    <location>
        <begin position="260"/>
        <end position="274"/>
    </location>
</feature>
<feature type="non-terminal residue">
    <location>
        <position position="1"/>
    </location>
</feature>
<feature type="non-terminal residue">
    <location>
        <position position="274"/>
    </location>
</feature>
<proteinExistence type="evidence at protein level"/>
<keyword id="KW-0009">Actin-binding</keyword>
<keyword id="KW-0112">Calmodulin-binding</keyword>
<keyword id="KW-0963">Cytoplasm</keyword>
<keyword id="KW-0206">Cytoskeleton</keyword>
<keyword id="KW-0903">Direct protein sequencing</keyword>
<keyword id="KW-0514">Muscle protein</keyword>
<keyword id="KW-1185">Reference proteome</keyword>
<name>CALD1_MELGA</name>
<accession>P13505</accession>
<organism>
    <name type="scientific">Meleagris gallopavo</name>
    <name type="common">Wild turkey</name>
    <dbReference type="NCBI Taxonomy" id="9103"/>
    <lineage>
        <taxon>Eukaryota</taxon>
        <taxon>Metazoa</taxon>
        <taxon>Chordata</taxon>
        <taxon>Craniata</taxon>
        <taxon>Vertebrata</taxon>
        <taxon>Euteleostomi</taxon>
        <taxon>Archelosauria</taxon>
        <taxon>Archosauria</taxon>
        <taxon>Dinosauria</taxon>
        <taxon>Saurischia</taxon>
        <taxon>Theropoda</taxon>
        <taxon>Coelurosauria</taxon>
        <taxon>Aves</taxon>
        <taxon>Neognathae</taxon>
        <taxon>Galloanserae</taxon>
        <taxon>Galliformes</taxon>
        <taxon>Phasianidae</taxon>
        <taxon>Meleagridinae</taxon>
        <taxon>Meleagris</taxon>
    </lineage>
</organism>
<protein>
    <recommendedName>
        <fullName>Caldesmon, smooth muscle</fullName>
        <shortName>CDM</shortName>
    </recommendedName>
</protein>
<reference key="1">
    <citation type="journal article" date="1991" name="Protein Seq. Data Anal.">
        <title>Turkey gizzard caldesmon: complete sequence of a C-terminal thrombic fragment that binds actin, tropomyosin and calmodulin.</title>
        <authorList>
            <person name="Collins J.H."/>
            <person name="Leszyk J."/>
            <person name="Mornet D."/>
            <person name="Audemard E."/>
        </authorList>
    </citation>
    <scope>PROTEIN SEQUENCE</scope>
</reference>
<reference key="2">
    <citation type="journal article" date="1989" name="Biochem. Biophys. Res. Commun.">
        <title>Caldesmon structure and function: sequence analysis of a 35 kilodalton actin- and calmodulin-binding fragment from the C-terminus of the turkey gizzard protein.</title>
        <authorList>
            <person name="Leszyk J."/>
            <person name="Mornet D."/>
            <person name="Audemard E."/>
            <person name="Collins J.H."/>
        </authorList>
    </citation>
    <scope>PROTEIN SEQUENCE OF 1-239</scope>
    <source>
        <tissue>Gizzard</tissue>
    </source>
</reference>
<reference key="3">
    <citation type="journal article" date="1989" name="Biochem. Biophys. Res. Commun.">
        <title>Amino acid sequence of a 15 kilodalton actin-binding fragment of turkey gizzard caldesmon: similarity with dystrophin, tropomyosin and the tropomyosin-binding region of troponin T.</title>
        <authorList>
            <person name="Leszyk J."/>
            <person name="Mornet D."/>
            <person name="Audemard E."/>
            <person name="Collins J.H."/>
        </authorList>
    </citation>
    <scope>PROTEIN SEQUENCE OF 1-96</scope>
    <source>
        <tissue>Gizzard</tissue>
    </source>
</reference>
<evidence type="ECO:0000256" key="1">
    <source>
        <dbReference type="SAM" id="MobiDB-lite"/>
    </source>
</evidence>